<comment type="function">
    <text evidence="2">GTP hydrolase that promotes the GTP-dependent binding of aminoacyl-tRNA to the A-site of ribosomes during protein biosynthesis.</text>
</comment>
<comment type="catalytic activity">
    <reaction evidence="2">
        <text>GTP + H2O = GDP + phosphate + H(+)</text>
        <dbReference type="Rhea" id="RHEA:19669"/>
        <dbReference type="ChEBI" id="CHEBI:15377"/>
        <dbReference type="ChEBI" id="CHEBI:15378"/>
        <dbReference type="ChEBI" id="CHEBI:37565"/>
        <dbReference type="ChEBI" id="CHEBI:43474"/>
        <dbReference type="ChEBI" id="CHEBI:58189"/>
        <dbReference type="EC" id="3.6.5.3"/>
    </reaction>
    <physiologicalReaction direction="left-to-right" evidence="2">
        <dbReference type="Rhea" id="RHEA:19670"/>
    </physiologicalReaction>
</comment>
<comment type="subunit">
    <text evidence="2">Monomer.</text>
</comment>
<comment type="subcellular location">
    <subcellularLocation>
        <location evidence="2">Cytoplasm</location>
    </subcellularLocation>
</comment>
<comment type="similarity">
    <text evidence="2">Belongs to the TRAFAC class translation factor GTPase superfamily. Classic translation factor GTPase family. EF-Tu/EF-1A subfamily.</text>
</comment>
<sequence length="400" mass="43695">MAKQKFERTKPHVNVGTIGHVDHGKTTSTAAITLVLSKAGGAVAQAFDQIDKAPEERERGITISTSHVEYETANRHYAHVDCPGHADYVKNMITGAAQMDGAILVVSAADGPMPQTREHILLARQVGVPYIVVWLNKADMVDDPELMELVEMEIRELLSEYEFPGDDIPIIPGSGLKALQCGCGSRDCEWCGKIWNLMDAVDSYIPTPERATDKPFLMPVEDVFTITGRGTVATGRVERGVIKVGDEIEIVGLTEAPRKTVCTGVEMFRKLLDQAQAGDNIGALLRGVDRKDIERGQVLAKTGSIKPHTKFTGEVFVLSKEEGGRHTPFFNNYRPQFYFRTTDVTGVVTLPEGTEMVMPGDRVTITCEIISPIAMEEGLRFAIREGGRTVGAGVVVSIIE</sequence>
<gene>
    <name evidence="2" type="primary">tuf</name>
    <name type="ordered locus">DSY0469</name>
</gene>
<proteinExistence type="inferred from homology"/>
<organism>
    <name type="scientific">Desulfitobacterium hafniense (strain Y51)</name>
    <dbReference type="NCBI Taxonomy" id="138119"/>
    <lineage>
        <taxon>Bacteria</taxon>
        <taxon>Bacillati</taxon>
        <taxon>Bacillota</taxon>
        <taxon>Clostridia</taxon>
        <taxon>Eubacteriales</taxon>
        <taxon>Desulfitobacteriaceae</taxon>
        <taxon>Desulfitobacterium</taxon>
    </lineage>
</organism>
<feature type="chain" id="PRO_1000015650" description="Elongation factor Tu">
    <location>
        <begin position="1"/>
        <end position="400"/>
    </location>
</feature>
<feature type="domain" description="tr-type G">
    <location>
        <begin position="10"/>
        <end position="209"/>
    </location>
</feature>
<feature type="region of interest" description="G1" evidence="1">
    <location>
        <begin position="19"/>
        <end position="26"/>
    </location>
</feature>
<feature type="region of interest" description="G2" evidence="1">
    <location>
        <begin position="60"/>
        <end position="64"/>
    </location>
</feature>
<feature type="region of interest" description="G3" evidence="1">
    <location>
        <begin position="81"/>
        <end position="84"/>
    </location>
</feature>
<feature type="region of interest" description="G4" evidence="1">
    <location>
        <begin position="136"/>
        <end position="139"/>
    </location>
</feature>
<feature type="region of interest" description="G5" evidence="1">
    <location>
        <begin position="174"/>
        <end position="176"/>
    </location>
</feature>
<feature type="binding site" evidence="2">
    <location>
        <begin position="19"/>
        <end position="26"/>
    </location>
    <ligand>
        <name>GTP</name>
        <dbReference type="ChEBI" id="CHEBI:37565"/>
    </ligand>
</feature>
<feature type="binding site" evidence="2">
    <location>
        <position position="26"/>
    </location>
    <ligand>
        <name>Mg(2+)</name>
        <dbReference type="ChEBI" id="CHEBI:18420"/>
    </ligand>
</feature>
<feature type="binding site" evidence="2">
    <location>
        <begin position="81"/>
        <end position="85"/>
    </location>
    <ligand>
        <name>GTP</name>
        <dbReference type="ChEBI" id="CHEBI:37565"/>
    </ligand>
</feature>
<feature type="binding site" evidence="2">
    <location>
        <begin position="136"/>
        <end position="139"/>
    </location>
    <ligand>
        <name>GTP</name>
        <dbReference type="ChEBI" id="CHEBI:37565"/>
    </ligand>
</feature>
<dbReference type="EC" id="3.6.5.3" evidence="2"/>
<dbReference type="EMBL" id="AP008230">
    <property type="protein sequence ID" value="BAE82258.1"/>
    <property type="molecule type" value="Genomic_DNA"/>
</dbReference>
<dbReference type="RefSeq" id="WP_005810165.1">
    <property type="nucleotide sequence ID" value="NC_007907.1"/>
</dbReference>
<dbReference type="SMR" id="Q250N4"/>
<dbReference type="STRING" id="138119.DSY0469"/>
<dbReference type="KEGG" id="dsy:DSY0469"/>
<dbReference type="eggNOG" id="COG0050">
    <property type="taxonomic scope" value="Bacteria"/>
</dbReference>
<dbReference type="HOGENOM" id="CLU_007265_0_1_9"/>
<dbReference type="Proteomes" id="UP000001946">
    <property type="component" value="Chromosome"/>
</dbReference>
<dbReference type="GO" id="GO:0005829">
    <property type="term" value="C:cytosol"/>
    <property type="evidence" value="ECO:0007669"/>
    <property type="project" value="TreeGrafter"/>
</dbReference>
<dbReference type="GO" id="GO:0005525">
    <property type="term" value="F:GTP binding"/>
    <property type="evidence" value="ECO:0007669"/>
    <property type="project" value="UniProtKB-UniRule"/>
</dbReference>
<dbReference type="GO" id="GO:0003924">
    <property type="term" value="F:GTPase activity"/>
    <property type="evidence" value="ECO:0007669"/>
    <property type="project" value="InterPro"/>
</dbReference>
<dbReference type="GO" id="GO:0003746">
    <property type="term" value="F:translation elongation factor activity"/>
    <property type="evidence" value="ECO:0007669"/>
    <property type="project" value="UniProtKB-UniRule"/>
</dbReference>
<dbReference type="CDD" id="cd01884">
    <property type="entry name" value="EF_Tu"/>
    <property type="match status" value="1"/>
</dbReference>
<dbReference type="CDD" id="cd03697">
    <property type="entry name" value="EFTU_II"/>
    <property type="match status" value="1"/>
</dbReference>
<dbReference type="CDD" id="cd03707">
    <property type="entry name" value="EFTU_III"/>
    <property type="match status" value="1"/>
</dbReference>
<dbReference type="FunFam" id="2.40.30.10:FF:000001">
    <property type="entry name" value="Elongation factor Tu"/>
    <property type="match status" value="1"/>
</dbReference>
<dbReference type="FunFam" id="3.40.50.300:FF:000003">
    <property type="entry name" value="Elongation factor Tu"/>
    <property type="match status" value="1"/>
</dbReference>
<dbReference type="Gene3D" id="3.40.50.300">
    <property type="entry name" value="P-loop containing nucleotide triphosphate hydrolases"/>
    <property type="match status" value="1"/>
</dbReference>
<dbReference type="Gene3D" id="2.40.30.10">
    <property type="entry name" value="Translation factors"/>
    <property type="match status" value="2"/>
</dbReference>
<dbReference type="HAMAP" id="MF_00118_B">
    <property type="entry name" value="EF_Tu_B"/>
    <property type="match status" value="1"/>
</dbReference>
<dbReference type="InterPro" id="IPR041709">
    <property type="entry name" value="EF-Tu_GTP-bd"/>
</dbReference>
<dbReference type="InterPro" id="IPR050055">
    <property type="entry name" value="EF-Tu_GTPase"/>
</dbReference>
<dbReference type="InterPro" id="IPR004161">
    <property type="entry name" value="EFTu-like_2"/>
</dbReference>
<dbReference type="InterPro" id="IPR033720">
    <property type="entry name" value="EFTU_2"/>
</dbReference>
<dbReference type="InterPro" id="IPR031157">
    <property type="entry name" value="G_TR_CS"/>
</dbReference>
<dbReference type="InterPro" id="IPR027417">
    <property type="entry name" value="P-loop_NTPase"/>
</dbReference>
<dbReference type="InterPro" id="IPR005225">
    <property type="entry name" value="Small_GTP-bd"/>
</dbReference>
<dbReference type="InterPro" id="IPR000795">
    <property type="entry name" value="T_Tr_GTP-bd_dom"/>
</dbReference>
<dbReference type="InterPro" id="IPR009000">
    <property type="entry name" value="Transl_B-barrel_sf"/>
</dbReference>
<dbReference type="InterPro" id="IPR009001">
    <property type="entry name" value="Transl_elong_EF1A/Init_IF2_C"/>
</dbReference>
<dbReference type="InterPro" id="IPR004541">
    <property type="entry name" value="Transl_elong_EFTu/EF1A_bac/org"/>
</dbReference>
<dbReference type="InterPro" id="IPR004160">
    <property type="entry name" value="Transl_elong_EFTu/EF1A_C"/>
</dbReference>
<dbReference type="NCBIfam" id="TIGR00485">
    <property type="entry name" value="EF-Tu"/>
    <property type="match status" value="1"/>
</dbReference>
<dbReference type="NCBIfam" id="NF000766">
    <property type="entry name" value="PRK00049.1"/>
    <property type="match status" value="1"/>
</dbReference>
<dbReference type="NCBIfam" id="NF009372">
    <property type="entry name" value="PRK12735.1"/>
    <property type="match status" value="1"/>
</dbReference>
<dbReference type="NCBIfam" id="NF009373">
    <property type="entry name" value="PRK12736.1"/>
    <property type="match status" value="1"/>
</dbReference>
<dbReference type="NCBIfam" id="TIGR00231">
    <property type="entry name" value="small_GTP"/>
    <property type="match status" value="1"/>
</dbReference>
<dbReference type="PANTHER" id="PTHR43721:SF22">
    <property type="entry name" value="ELONGATION FACTOR TU, MITOCHONDRIAL"/>
    <property type="match status" value="1"/>
</dbReference>
<dbReference type="PANTHER" id="PTHR43721">
    <property type="entry name" value="ELONGATION FACTOR TU-RELATED"/>
    <property type="match status" value="1"/>
</dbReference>
<dbReference type="Pfam" id="PF00009">
    <property type="entry name" value="GTP_EFTU"/>
    <property type="match status" value="1"/>
</dbReference>
<dbReference type="Pfam" id="PF03144">
    <property type="entry name" value="GTP_EFTU_D2"/>
    <property type="match status" value="1"/>
</dbReference>
<dbReference type="Pfam" id="PF03143">
    <property type="entry name" value="GTP_EFTU_D3"/>
    <property type="match status" value="1"/>
</dbReference>
<dbReference type="PRINTS" id="PR00315">
    <property type="entry name" value="ELONGATNFCT"/>
</dbReference>
<dbReference type="SUPFAM" id="SSF50465">
    <property type="entry name" value="EF-Tu/eEF-1alpha/eIF2-gamma C-terminal domain"/>
    <property type="match status" value="1"/>
</dbReference>
<dbReference type="SUPFAM" id="SSF52540">
    <property type="entry name" value="P-loop containing nucleoside triphosphate hydrolases"/>
    <property type="match status" value="1"/>
</dbReference>
<dbReference type="SUPFAM" id="SSF50447">
    <property type="entry name" value="Translation proteins"/>
    <property type="match status" value="1"/>
</dbReference>
<dbReference type="PROSITE" id="PS00301">
    <property type="entry name" value="G_TR_1"/>
    <property type="match status" value="1"/>
</dbReference>
<dbReference type="PROSITE" id="PS51722">
    <property type="entry name" value="G_TR_2"/>
    <property type="match status" value="1"/>
</dbReference>
<protein>
    <recommendedName>
        <fullName evidence="2">Elongation factor Tu</fullName>
        <shortName evidence="2">EF-Tu</shortName>
        <ecNumber evidence="2">3.6.5.3</ecNumber>
    </recommendedName>
</protein>
<evidence type="ECO:0000250" key="1"/>
<evidence type="ECO:0000255" key="2">
    <source>
        <dbReference type="HAMAP-Rule" id="MF_00118"/>
    </source>
</evidence>
<reference key="1">
    <citation type="journal article" date="2006" name="J. Bacteriol.">
        <title>Complete genome sequence of the dehalorespiring bacterium Desulfitobacterium hafniense Y51 and comparison with Dehalococcoides ethenogenes 195.</title>
        <authorList>
            <person name="Nonaka H."/>
            <person name="Keresztes G."/>
            <person name="Shinoda Y."/>
            <person name="Ikenaga Y."/>
            <person name="Abe M."/>
            <person name="Naito K."/>
            <person name="Inatomi K."/>
            <person name="Furukawa K."/>
            <person name="Inui M."/>
            <person name="Yukawa H."/>
        </authorList>
    </citation>
    <scope>NUCLEOTIDE SEQUENCE [LARGE SCALE GENOMIC DNA]</scope>
    <source>
        <strain>Y51</strain>
    </source>
</reference>
<name>EFTU_DESHY</name>
<keyword id="KW-0963">Cytoplasm</keyword>
<keyword id="KW-0251">Elongation factor</keyword>
<keyword id="KW-0342">GTP-binding</keyword>
<keyword id="KW-0378">Hydrolase</keyword>
<keyword id="KW-0460">Magnesium</keyword>
<keyword id="KW-0479">Metal-binding</keyword>
<keyword id="KW-0547">Nucleotide-binding</keyword>
<keyword id="KW-0648">Protein biosynthesis</keyword>
<keyword id="KW-1185">Reference proteome</keyword>
<accession>Q250N4</accession>